<evidence type="ECO:0000269" key="1">
    <source>
    </source>
</evidence>
<evidence type="ECO:0000269" key="2">
    <source>
    </source>
</evidence>
<evidence type="ECO:0000269" key="3">
    <source>
    </source>
</evidence>
<evidence type="ECO:0000269" key="4">
    <source>
    </source>
</evidence>
<evidence type="ECO:0000269" key="5">
    <source>
    </source>
</evidence>
<evidence type="ECO:0000269" key="6">
    <source>
    </source>
</evidence>
<evidence type="ECO:0000269" key="7">
    <source>
    </source>
</evidence>
<evidence type="ECO:0000269" key="8">
    <source>
    </source>
</evidence>
<evidence type="ECO:0000269" key="9">
    <source>
    </source>
</evidence>
<evidence type="ECO:0000305" key="10"/>
<evidence type="ECO:0007829" key="11">
    <source>
        <dbReference type="PDB" id="5GMK"/>
    </source>
</evidence>
<evidence type="ECO:0007829" key="12">
    <source>
        <dbReference type="PDB" id="6J6G"/>
    </source>
</evidence>
<evidence type="ECO:0007829" key="13">
    <source>
        <dbReference type="PDB" id="9DTR"/>
    </source>
</evidence>
<sequence>MSRNVDKANSVLVRFQEQQAESAGGYKDYSRYQRPRNVSKVKSIKEANEWKRQVSKEIKQKSTRIYDPSLNEMQIAELNDELNNLFKEWKRWQWHIDHTLMEKKTKRKRLEDSHVLMNSGKLINGKRYFGRALELPEVKEWLKQSQRQNDGGSINTKCIPKDRNDFYYHGKVTAALTEFEANWTSILKAHYNVPVNEDEEEMSRQTQEIHVPTLADMEHWLVQRRKKKLMDELNL</sequence>
<dbReference type="EMBL" id="M37696">
    <property type="protein sequence ID" value="AAB59345.1"/>
    <property type="status" value="ALT_INIT"/>
    <property type="molecule type" value="Genomic_DNA"/>
</dbReference>
<dbReference type="EMBL" id="L26347">
    <property type="protein sequence ID" value="AAA62858.1"/>
    <property type="molecule type" value="Genomic_DNA"/>
</dbReference>
<dbReference type="EMBL" id="L36344">
    <property type="protein sequence ID" value="AAA88753.1"/>
    <property type="molecule type" value="Genomic_DNA"/>
</dbReference>
<dbReference type="EMBL" id="Z49550">
    <property type="protein sequence ID" value="CAA89578.1"/>
    <property type="molecule type" value="Genomic_DNA"/>
</dbReference>
<dbReference type="EMBL" id="AY558078">
    <property type="protein sequence ID" value="AAS56404.1"/>
    <property type="molecule type" value="Genomic_DNA"/>
</dbReference>
<dbReference type="EMBL" id="BK006943">
    <property type="protein sequence ID" value="DAA08837.1"/>
    <property type="molecule type" value="Genomic_DNA"/>
</dbReference>
<dbReference type="PIR" id="S46590">
    <property type="entry name" value="S46590"/>
</dbReference>
<dbReference type="RefSeq" id="NP_012584.3">
    <property type="nucleotide sequence ID" value="NM_001181708.3"/>
</dbReference>
<dbReference type="PDB" id="5GMK">
    <property type="method" value="EM"/>
    <property type="resolution" value="3.40 A"/>
    <property type="chains" value="H=1-235"/>
</dbReference>
<dbReference type="PDB" id="5LJ3">
    <property type="method" value="EM"/>
    <property type="resolution" value="3.80 A"/>
    <property type="chains" value="G=1-235"/>
</dbReference>
<dbReference type="PDB" id="5LJ5">
    <property type="method" value="EM"/>
    <property type="resolution" value="3.80 A"/>
    <property type="chains" value="G=1-235"/>
</dbReference>
<dbReference type="PDB" id="6J6G">
    <property type="method" value="EM"/>
    <property type="resolution" value="3.20 A"/>
    <property type="chains" value="H=1-235"/>
</dbReference>
<dbReference type="PDB" id="6J6H">
    <property type="method" value="EM"/>
    <property type="resolution" value="3.60 A"/>
    <property type="chains" value="H=1-235"/>
</dbReference>
<dbReference type="PDB" id="6J6N">
    <property type="method" value="EM"/>
    <property type="resolution" value="3.86 A"/>
    <property type="chains" value="H=1-235"/>
</dbReference>
<dbReference type="PDB" id="6J6Q">
    <property type="method" value="EM"/>
    <property type="resolution" value="3.70 A"/>
    <property type="chains" value="H=1-235"/>
</dbReference>
<dbReference type="PDB" id="9DTR">
    <property type="method" value="EM"/>
    <property type="resolution" value="2.31 A"/>
    <property type="chains" value="G=1-235"/>
</dbReference>
<dbReference type="PDBsum" id="5GMK"/>
<dbReference type="PDBsum" id="5LJ3"/>
<dbReference type="PDBsum" id="5LJ5"/>
<dbReference type="PDBsum" id="6J6G"/>
<dbReference type="PDBsum" id="6J6H"/>
<dbReference type="PDBsum" id="6J6N"/>
<dbReference type="PDBsum" id="6J6Q"/>
<dbReference type="PDBsum" id="9DTR"/>
<dbReference type="EMDB" id="EMD-0686"/>
<dbReference type="EMDB" id="EMD-0687"/>
<dbReference type="EMDB" id="EMD-0691"/>
<dbReference type="EMDB" id="EMD-0692"/>
<dbReference type="EMDB" id="EMD-4057"/>
<dbReference type="EMDB" id="EMD-47157"/>
<dbReference type="EMDB" id="EMD-9525"/>
<dbReference type="SMR" id="P21374"/>
<dbReference type="BioGRID" id="33803">
    <property type="interactions" value="204"/>
</dbReference>
<dbReference type="ComplexPortal" id="CPX-1651">
    <property type="entry name" value="PRP19-associated complex"/>
</dbReference>
<dbReference type="ComplexPortal" id="CPX-1885">
    <property type="entry name" value="NineTeen complex"/>
</dbReference>
<dbReference type="DIP" id="DIP-1682N"/>
<dbReference type="FunCoup" id="P21374">
    <property type="interactions" value="293"/>
</dbReference>
<dbReference type="IntAct" id="P21374">
    <property type="interactions" value="45"/>
</dbReference>
<dbReference type="MINT" id="P21374"/>
<dbReference type="STRING" id="4932.YJR050W"/>
<dbReference type="iPTMnet" id="P21374"/>
<dbReference type="PaxDb" id="4932-YJR050W"/>
<dbReference type="PeptideAtlas" id="P21374"/>
<dbReference type="EnsemblFungi" id="YJR050W_mRNA">
    <property type="protein sequence ID" value="YJR050W"/>
    <property type="gene ID" value="YJR050W"/>
</dbReference>
<dbReference type="GeneID" id="853509"/>
<dbReference type="KEGG" id="sce:YJR050W"/>
<dbReference type="AGR" id="SGD:S000003811"/>
<dbReference type="SGD" id="S000003811">
    <property type="gene designation" value="ISY1"/>
</dbReference>
<dbReference type="VEuPathDB" id="FungiDB:YJR050W"/>
<dbReference type="eggNOG" id="KOG3068">
    <property type="taxonomic scope" value="Eukaryota"/>
</dbReference>
<dbReference type="GeneTree" id="ENSGT00390000014109"/>
<dbReference type="HOGENOM" id="CLU_043453_2_1_1"/>
<dbReference type="InParanoid" id="P21374"/>
<dbReference type="OMA" id="QKSTRIY"/>
<dbReference type="OrthoDB" id="1739576at2759"/>
<dbReference type="BioCyc" id="YEAST:G3O-31685-MONOMER"/>
<dbReference type="Reactome" id="R-SCE-6781823">
    <property type="pathway name" value="Formation of TC-NER Pre-Incision Complex"/>
</dbReference>
<dbReference type="Reactome" id="R-SCE-6782135">
    <property type="pathway name" value="Dual incision in TC-NER"/>
</dbReference>
<dbReference type="Reactome" id="R-SCE-6782210">
    <property type="pathway name" value="Gap-filling DNA repair synthesis and ligation in TC-NER"/>
</dbReference>
<dbReference type="BioGRID-ORCS" id="853509">
    <property type="hits" value="3 hits in 10 CRISPR screens"/>
</dbReference>
<dbReference type="PRO" id="PR:P21374"/>
<dbReference type="Proteomes" id="UP000002311">
    <property type="component" value="Chromosome X"/>
</dbReference>
<dbReference type="RNAct" id="P21374">
    <property type="molecule type" value="protein"/>
</dbReference>
<dbReference type="GO" id="GO:0071013">
    <property type="term" value="C:catalytic step 2 spliceosome"/>
    <property type="evidence" value="ECO:0000318"/>
    <property type="project" value="GO_Central"/>
</dbReference>
<dbReference type="GO" id="GO:0005737">
    <property type="term" value="C:cytoplasm"/>
    <property type="evidence" value="ECO:0007669"/>
    <property type="project" value="UniProtKB-SubCell"/>
</dbReference>
<dbReference type="GO" id="GO:0071014">
    <property type="term" value="C:post-mRNA release spliceosomal complex"/>
    <property type="evidence" value="ECO:0000314"/>
    <property type="project" value="SGD"/>
</dbReference>
<dbReference type="GO" id="GO:0071020">
    <property type="term" value="C:post-spliceosomal complex"/>
    <property type="evidence" value="ECO:0000314"/>
    <property type="project" value="SGD"/>
</dbReference>
<dbReference type="GO" id="GO:0000974">
    <property type="term" value="C:Prp19 complex"/>
    <property type="evidence" value="ECO:0000314"/>
    <property type="project" value="SGD"/>
</dbReference>
<dbReference type="GO" id="GO:0071006">
    <property type="term" value="C:U2-type catalytic step 1 spliceosome"/>
    <property type="evidence" value="ECO:0000314"/>
    <property type="project" value="SGD"/>
</dbReference>
<dbReference type="GO" id="GO:0071007">
    <property type="term" value="C:U2-type catalytic step 2 spliceosome"/>
    <property type="evidence" value="ECO:0000314"/>
    <property type="project" value="SGD"/>
</dbReference>
<dbReference type="GO" id="GO:0000350">
    <property type="term" value="P:generation of catalytic spliceosome for second transesterification step"/>
    <property type="evidence" value="ECO:0000315"/>
    <property type="project" value="SGD"/>
</dbReference>
<dbReference type="GO" id="GO:0000389">
    <property type="term" value="P:mRNA 3'-splice site recognition"/>
    <property type="evidence" value="ECO:0000315"/>
    <property type="project" value="SGD"/>
</dbReference>
<dbReference type="GO" id="GO:0000398">
    <property type="term" value="P:mRNA splicing, via spliceosome"/>
    <property type="evidence" value="ECO:0000303"/>
    <property type="project" value="ComplexPortal"/>
</dbReference>
<dbReference type="DisProt" id="DP01593"/>
<dbReference type="FunFam" id="1.10.287.660:FF:000001">
    <property type="entry name" value="pre-mRNA-splicing factor ISY1 homolog"/>
    <property type="match status" value="1"/>
</dbReference>
<dbReference type="Gene3D" id="1.10.287.660">
    <property type="entry name" value="Helix hairpin bin"/>
    <property type="match status" value="1"/>
</dbReference>
<dbReference type="InterPro" id="IPR029012">
    <property type="entry name" value="Helix_hairpin_bin_sf"/>
</dbReference>
<dbReference type="InterPro" id="IPR009360">
    <property type="entry name" value="Isy1"/>
</dbReference>
<dbReference type="InterPro" id="IPR037200">
    <property type="entry name" value="Isy1_sf"/>
</dbReference>
<dbReference type="PANTHER" id="PTHR13021">
    <property type="entry name" value="PRE-MRNA-SPLICING FACTOR ISY1"/>
    <property type="match status" value="1"/>
</dbReference>
<dbReference type="Pfam" id="PF06246">
    <property type="entry name" value="Isy1"/>
    <property type="match status" value="1"/>
</dbReference>
<dbReference type="SUPFAM" id="SSF140102">
    <property type="entry name" value="ISY1 domain-like"/>
    <property type="match status" value="1"/>
</dbReference>
<accession>P21374</accession>
<accession>D6VWM1</accession>
<gene>
    <name type="primary">ISY1</name>
    <name type="synonym">NTC30</name>
    <name type="synonym">UTR3</name>
    <name type="ordered locus">YJR050W</name>
    <name type="ORF">J1657</name>
</gene>
<organism>
    <name type="scientific">Saccharomyces cerevisiae (strain ATCC 204508 / S288c)</name>
    <name type="common">Baker's yeast</name>
    <dbReference type="NCBI Taxonomy" id="559292"/>
    <lineage>
        <taxon>Eukaryota</taxon>
        <taxon>Fungi</taxon>
        <taxon>Dikarya</taxon>
        <taxon>Ascomycota</taxon>
        <taxon>Saccharomycotina</taxon>
        <taxon>Saccharomycetes</taxon>
        <taxon>Saccharomycetales</taxon>
        <taxon>Saccharomycetaceae</taxon>
        <taxon>Saccharomyces</taxon>
    </lineage>
</organism>
<protein>
    <recommendedName>
        <fullName>Pre-mRNA-splicing factor ISY1</fullName>
    </recommendedName>
    <alternativeName>
        <fullName>Interactor of SYF1</fullName>
    </alternativeName>
    <alternativeName>
        <fullName>PRP19-associated complex protein 30</fullName>
    </alternativeName>
</protein>
<reference key="1">
    <citation type="journal article" date="1990" name="Gene">
        <title>Nucleotide sequence of the COR region: a cluster of six genes in the yeast Saccharomyces cerevisiae.</title>
        <authorList>
            <person name="Melnick L."/>
            <person name="Sherman F."/>
        </authorList>
    </citation>
    <scope>PRELIMINARY NUCLEOTIDE SEQUENCE [GENOMIC DNA]</scope>
</reference>
<reference key="2">
    <citation type="journal article" date="1994" name="Yeast">
        <title>Revised nucleotide sequence of the COR region of yeast Saccharomyces cerevisiae chromosome X.</title>
        <authorList>
            <person name="Huang M.-E."/>
            <person name="Manus V."/>
            <person name="Chuat J.-C."/>
            <person name="Galibert F."/>
        </authorList>
    </citation>
    <scope>NUCLEOTIDE SEQUENCE [GENOMIC DNA]</scope>
    <source>
        <strain>ATCC 204508 / S288c</strain>
    </source>
</reference>
<reference key="3">
    <citation type="journal article" date="1996" name="EMBO J.">
        <title>Complete nucleotide sequence of Saccharomyces cerevisiae chromosome X.</title>
        <authorList>
            <person name="Galibert F."/>
            <person name="Alexandraki D."/>
            <person name="Baur A."/>
            <person name="Boles E."/>
            <person name="Chalwatzis N."/>
            <person name="Chuat J.-C."/>
            <person name="Coster F."/>
            <person name="Cziepluch C."/>
            <person name="de Haan M."/>
            <person name="Domdey H."/>
            <person name="Durand P."/>
            <person name="Entian K.-D."/>
            <person name="Gatius M."/>
            <person name="Goffeau A."/>
            <person name="Grivell L.A."/>
            <person name="Hennemann A."/>
            <person name="Herbert C.J."/>
            <person name="Heumann K."/>
            <person name="Hilger F."/>
            <person name="Hollenberg C.P."/>
            <person name="Huang M.-E."/>
            <person name="Jacq C."/>
            <person name="Jauniaux J.-C."/>
            <person name="Katsoulou C."/>
            <person name="Kirchrath L."/>
            <person name="Kleine K."/>
            <person name="Kordes E."/>
            <person name="Koetter P."/>
            <person name="Liebl S."/>
            <person name="Louis E.J."/>
            <person name="Manus V."/>
            <person name="Mewes H.-W."/>
            <person name="Miosga T."/>
            <person name="Obermaier B."/>
            <person name="Perea J."/>
            <person name="Pohl T.M."/>
            <person name="Portetelle D."/>
            <person name="Pujol A."/>
            <person name="Purnelle B."/>
            <person name="Ramezani Rad M."/>
            <person name="Rasmussen S.W."/>
            <person name="Rose M."/>
            <person name="Rossau R."/>
            <person name="Schaaff-Gerstenschlaeger I."/>
            <person name="Smits P.H.M."/>
            <person name="Scarcez T."/>
            <person name="Soriano N."/>
            <person name="To Van D."/>
            <person name="Tzermia M."/>
            <person name="Van Broekhoven A."/>
            <person name="Vandenbol M."/>
            <person name="Wedler H."/>
            <person name="von Wettstein D."/>
            <person name="Wambutt R."/>
            <person name="Zagulski M."/>
            <person name="Zollner A."/>
            <person name="Karpfinger-Hartl L."/>
        </authorList>
    </citation>
    <scope>NUCLEOTIDE SEQUENCE [LARGE SCALE GENOMIC DNA]</scope>
    <source>
        <strain>ATCC 204508 / S288c</strain>
    </source>
</reference>
<reference key="4">
    <citation type="journal article" date="2014" name="G3 (Bethesda)">
        <title>The reference genome sequence of Saccharomyces cerevisiae: Then and now.</title>
        <authorList>
            <person name="Engel S.R."/>
            <person name="Dietrich F.S."/>
            <person name="Fisk D.G."/>
            <person name="Binkley G."/>
            <person name="Balakrishnan R."/>
            <person name="Costanzo M.C."/>
            <person name="Dwight S.S."/>
            <person name="Hitz B.C."/>
            <person name="Karra K."/>
            <person name="Nash R.S."/>
            <person name="Weng S."/>
            <person name="Wong E.D."/>
            <person name="Lloyd P."/>
            <person name="Skrzypek M.S."/>
            <person name="Miyasato S.R."/>
            <person name="Simison M."/>
            <person name="Cherry J.M."/>
        </authorList>
    </citation>
    <scope>GENOME REANNOTATION</scope>
    <source>
        <strain>ATCC 204508 / S288c</strain>
    </source>
</reference>
<reference key="5">
    <citation type="journal article" date="2007" name="Genome Res.">
        <title>Approaching a complete repository of sequence-verified protein-encoding clones for Saccharomyces cerevisiae.</title>
        <authorList>
            <person name="Hu Y."/>
            <person name="Rolfs A."/>
            <person name="Bhullar B."/>
            <person name="Murthy T.V.S."/>
            <person name="Zhu C."/>
            <person name="Berger M.F."/>
            <person name="Camargo A.A."/>
            <person name="Kelley F."/>
            <person name="McCarron S."/>
            <person name="Jepson D."/>
            <person name="Richardson A."/>
            <person name="Raphael J."/>
            <person name="Moreira D."/>
            <person name="Taycher E."/>
            <person name="Zuo D."/>
            <person name="Mohr S."/>
            <person name="Kane M.F."/>
            <person name="Williamson J."/>
            <person name="Simpson A.J.G."/>
            <person name="Bulyk M.L."/>
            <person name="Harlow E."/>
            <person name="Marsischky G."/>
            <person name="Kolodner R.D."/>
            <person name="LaBaer J."/>
        </authorList>
    </citation>
    <scope>NUCLEOTIDE SEQUENCE [GENOMIC DNA]</scope>
    <source>
        <strain>ATCC 204508 / S288c</strain>
    </source>
</reference>
<reference key="6">
    <citation type="journal article" date="1999" name="RNA">
        <title>The identification and characterization of a novel splicing protein, Isy1p, of Saccharomyces cerevisiae.</title>
        <authorList>
            <person name="Dix I."/>
            <person name="Russell C.S."/>
            <person name="Yehuda S.B."/>
            <person name="Kupiec M."/>
            <person name="Beggs J.D."/>
        </authorList>
    </citation>
    <scope>FUNCTION</scope>
    <scope>INTERACTION WITH SYF1</scope>
    <scope>IDENTIFICATION IN THE PRP19-ASSOCIATED COMPLEX</scope>
</reference>
<reference key="7">
    <citation type="journal article" date="2000" name="Genetics">
        <title>Genetic and physical interactions between factors involved in both cell cycle progression and pre-mRNA splicing in Saccharomyces cerevisiae.</title>
        <authorList>
            <person name="Ben-Yehuda S."/>
            <person name="Dix I."/>
            <person name="Russell C.S."/>
            <person name="McGarvey M."/>
            <person name="Beggs J.D."/>
            <person name="Kupiec M."/>
        </authorList>
    </citation>
    <scope>INTERACTION WITH CEF1; CLF1 AND SYF1</scope>
</reference>
<reference key="8">
    <citation type="journal article" date="2001" name="J. Biol. Chem.">
        <title>Identification and characterization of two novel components of the Prp19p-associated complex, Ntc30p and Ntc20p.</title>
        <authorList>
            <person name="Chen C.-H."/>
            <person name="Tsai W.-Y."/>
            <person name="Chen H.-R."/>
            <person name="Wang C.-H."/>
            <person name="Cheng S.-C."/>
        </authorList>
    </citation>
    <scope>FUNCTION</scope>
    <scope>INTERACTION WITH CEF1</scope>
    <scope>IDENTIFICATION IN THE SPLICEOSOME</scope>
</reference>
<reference key="9">
    <citation type="journal article" date="2002" name="Mol. Cell. Biol.">
        <title>Proteomics analysis reveals stable multiprotein complexes in both fission and budding yeasts containing Myb-related Cdc5p/Cef1p, novel pre-mRNA splicing factors, and snRNAs.</title>
        <authorList>
            <person name="Ohi M.D."/>
            <person name="Link A.J."/>
            <person name="Ren L."/>
            <person name="Jennings J.L."/>
            <person name="McDonald W.H."/>
            <person name="Gould K.L."/>
        </authorList>
    </citation>
    <scope>IDENTIFICATION IN THE CWC COMPLEX</scope>
    <scope>IDENTIFICATION BY MASS SPECTROMETRY</scope>
</reference>
<reference key="10">
    <citation type="journal article" date="2002" name="Nucleic Acids Res.">
        <title>Functional and physical interactions between components of the Prp19p-associated complex.</title>
        <authorList>
            <person name="Chen C.-H."/>
            <person name="Yu W.-C."/>
            <person name="Tsao T.Y."/>
            <person name="Wang L.-Y."/>
            <person name="Chen H.-R."/>
            <person name="Lin J.-Y."/>
            <person name="Tsai W.-Y."/>
            <person name="Cheng S.-C."/>
        </authorList>
    </citation>
    <scope>IDENTIFICATION IN THE PRP19-ASSOCIATED COMPLEX</scope>
</reference>
<reference key="11">
    <citation type="journal article" date="2002" name="Nucleic Acids Res.">
        <title>Mutations in genes of Saccharomyces cerevisiae encoding pre-mRNA splicing factors cause cell cycle arrest through activation of the spindle checkpoint.</title>
        <authorList>
            <person name="Dahan O."/>
            <person name="Kupiec M."/>
        </authorList>
    </citation>
    <scope>FUNCTION</scope>
</reference>
<reference key="12">
    <citation type="journal article" date="2002" name="RNA">
        <title>Characterization of interactions among the Cef1p-Prp19p-associated splicing complex.</title>
        <authorList>
            <person name="Ohi M.D."/>
            <person name="Gould K.L."/>
        </authorList>
    </citation>
    <scope>INTERACTION WITH CLF1; CWC2 AND SYF1</scope>
</reference>
<reference key="13">
    <citation type="journal article" date="2003" name="Mol. Cell">
        <title>Assigning function to yeast proteins by integration of technologies.</title>
        <authorList>
            <person name="Hazbun T.R."/>
            <person name="Malmstroem L."/>
            <person name="Anderson S."/>
            <person name="Graczyk B.J."/>
            <person name="Fox B."/>
            <person name="Riffle M."/>
            <person name="Sundin B.A."/>
            <person name="Aranda J.D."/>
            <person name="McDonald W.H."/>
            <person name="Chiu C.-H."/>
            <person name="Snydsman B.E."/>
            <person name="Bradley P."/>
            <person name="Muller E.G.D."/>
            <person name="Fields S."/>
            <person name="Baker D."/>
            <person name="Yates J.R. III"/>
            <person name="Davis T.N."/>
        </authorList>
    </citation>
    <scope>IDENTIFICATION BY MASS SPECTROMETRY</scope>
</reference>
<reference key="14">
    <citation type="journal article" date="2003" name="Nature">
        <title>Global analysis of protein localization in budding yeast.</title>
        <authorList>
            <person name="Huh W.-K."/>
            <person name="Falvo J.V."/>
            <person name="Gerke L.C."/>
            <person name="Carroll A.S."/>
            <person name="Howson R.W."/>
            <person name="Weissman J.S."/>
            <person name="O'Shea E.K."/>
        </authorList>
    </citation>
    <scope>SUBCELLULAR LOCATION [LARGE SCALE ANALYSIS]</scope>
</reference>
<reference key="15">
    <citation type="journal article" date="2003" name="Nature">
        <title>Global analysis of protein expression in yeast.</title>
        <authorList>
            <person name="Ghaemmaghami S."/>
            <person name="Huh W.-K."/>
            <person name="Bower K."/>
            <person name="Howson R.W."/>
            <person name="Belle A."/>
            <person name="Dephoure N."/>
            <person name="O'Shea E.K."/>
            <person name="Weissman J.S."/>
        </authorList>
    </citation>
    <scope>LEVEL OF PROTEIN EXPRESSION [LARGE SCALE ANALYSIS]</scope>
</reference>
<keyword id="KW-0002">3D-structure</keyword>
<keyword id="KW-0963">Cytoplasm</keyword>
<keyword id="KW-0507">mRNA processing</keyword>
<keyword id="KW-0508">mRNA splicing</keyword>
<keyword id="KW-0539">Nucleus</keyword>
<keyword id="KW-1185">Reference proteome</keyword>
<keyword id="KW-0747">Spliceosome</keyword>
<proteinExistence type="evidence at protein level"/>
<name>ISY1_YEAST</name>
<comment type="function">
    <text evidence="1 2 7">Involved in pre-mRNA splicing and cell cycle control. As a component of the NTC complex (or PRP19-associated complex), associates to the spliceosome to mediate conformational rearrangement or to stabilize the structure of the spliceosome after U4 snRNA dissociation, which leads to spliceosome maturation. The cell cycle arrest of SYF2 defective cells may be due to the inefficient splicing of TUB1. Also involved in DNA repair.</text>
</comment>
<comment type="subunit">
    <text evidence="1 2 3 4 5 6">Belongs to the NTC complex (or PRP19-associated complex), composed of at least CEF1, CLF1, ISY1, NTC20, SNT309, SYF1, SYF2, and PRP19. The NTC complex associates with the spliceosome after the release of the U1 and U4 snRNAs and forms the CWC spliceosome subcomplex (or CEF1-associated complex) reminiscent of a late-stage spliceosome composed also of the U2, U5 and U6 snRNAs and at least BUD13, BUD31, BRR2, CDC40, CUS1, CWC2, CWC15, CWC21, CWC22, CWC23, CWC24, CWC25, CWC27, ECM2, HSH155, IST3, LEA1, MSL1, PRP8, PRP9, PRP11, PRP21, PRP22, PRP45, PRP46, SLU7, SMB1, SMD1, SMD2, SMD3, SMX2, SMX3, SNU114, SPP2, RSE1 and YJU2. Interacts with CEF1, CWC2, CLF1, and SYF1.</text>
</comment>
<comment type="interaction">
    <interactant intactId="EBI-9382">
        <id>P21374</id>
    </interactant>
    <interactant intactId="EBI-484">
        <id>Q12309</id>
        <label>CLF1</label>
    </interactant>
    <organismsDiffer>false</organismsDiffer>
    <experiments>5</experiments>
</comment>
<comment type="interaction">
    <interactant intactId="EBI-9382">
        <id>P21374</id>
    </interactant>
    <interactant intactId="EBI-20921">
        <id>P38302</id>
        <label>NTC20</label>
    </interactant>
    <organismsDiffer>false</organismsDiffer>
    <experiments>2</experiments>
</comment>
<comment type="interaction">
    <interactant intactId="EBI-9382">
        <id>P21374</id>
    </interactant>
    <interactant intactId="EBI-493">
        <id>P32523</id>
        <label>PRP19</label>
    </interactant>
    <organismsDiffer>false</organismsDiffer>
    <experiments>7</experiments>
</comment>
<comment type="interaction">
    <interactant intactId="EBI-9382">
        <id>P21374</id>
    </interactant>
    <interactant intactId="EBI-540">
        <id>Q04048</id>
        <label>SYF1</label>
    </interactant>
    <organismsDiffer>false</organismsDiffer>
    <experiments>5</experiments>
</comment>
<comment type="subcellular location">
    <subcellularLocation>
        <location evidence="8">Cytoplasm</location>
    </subcellularLocation>
    <subcellularLocation>
        <location evidence="8">Nucleus</location>
    </subcellularLocation>
</comment>
<comment type="miscellaneous">
    <text evidence="9">Present with 1990 molecules/cell in log phase SD medium.</text>
</comment>
<comment type="similarity">
    <text evidence="10">Belongs to the ISY1 family.</text>
</comment>
<comment type="sequence caution" evidence="10">
    <conflict type="erroneous initiation">
        <sequence resource="EMBL-CDS" id="AAB59345"/>
    </conflict>
</comment>
<feature type="chain" id="PRO_0000192976" description="Pre-mRNA-splicing factor ISY1">
    <location>
        <begin position="1"/>
        <end position="235"/>
    </location>
</feature>
<feature type="helix" evidence="11">
    <location>
        <begin position="4"/>
        <end position="7"/>
    </location>
</feature>
<feature type="helix" evidence="11">
    <location>
        <begin position="11"/>
        <end position="23"/>
    </location>
</feature>
<feature type="strand" evidence="12">
    <location>
        <begin position="30"/>
        <end position="32"/>
    </location>
</feature>
<feature type="helix" evidence="12">
    <location>
        <begin position="45"/>
        <end position="63"/>
    </location>
</feature>
<feature type="helix" evidence="12">
    <location>
        <begin position="72"/>
        <end position="95"/>
    </location>
</feature>
<feature type="helix" evidence="13">
    <location>
        <begin position="174"/>
        <end position="182"/>
    </location>
</feature>
<feature type="helix" evidence="13">
    <location>
        <begin position="214"/>
        <end position="216"/>
    </location>
</feature>
<feature type="helix" evidence="13">
    <location>
        <begin position="218"/>
        <end position="221"/>
    </location>
</feature>